<name>GOX_ASPC5</name>
<reference key="1">
    <citation type="journal article" date="2017" name="Genome Biol.">
        <title>Comparative genomics reveals high biological diversity and specific adaptations in the industrially and medically important fungal genus Aspergillus.</title>
        <authorList>
            <person name="de Vries R.P."/>
            <person name="Riley R."/>
            <person name="Wiebenga A."/>
            <person name="Aguilar-Osorio G."/>
            <person name="Amillis S."/>
            <person name="Uchima C.A."/>
            <person name="Anderluh G."/>
            <person name="Asadollahi M."/>
            <person name="Askin M."/>
            <person name="Barry K."/>
            <person name="Battaglia E."/>
            <person name="Bayram O."/>
            <person name="Benocci T."/>
            <person name="Braus-Stromeyer S.A."/>
            <person name="Caldana C."/>
            <person name="Canovas D."/>
            <person name="Cerqueira G.C."/>
            <person name="Chen F."/>
            <person name="Chen W."/>
            <person name="Choi C."/>
            <person name="Clum A."/>
            <person name="Dos Santos R.A."/>
            <person name="Damasio A.R."/>
            <person name="Diallinas G."/>
            <person name="Emri T."/>
            <person name="Fekete E."/>
            <person name="Flipphi M."/>
            <person name="Freyberg S."/>
            <person name="Gallo A."/>
            <person name="Gournas C."/>
            <person name="Habgood R."/>
            <person name="Hainaut M."/>
            <person name="Harispe M.L."/>
            <person name="Henrissat B."/>
            <person name="Hilden K.S."/>
            <person name="Hope R."/>
            <person name="Hossain A."/>
            <person name="Karabika E."/>
            <person name="Karaffa L."/>
            <person name="Karanyi Z."/>
            <person name="Krasevec N."/>
            <person name="Kuo A."/>
            <person name="Kusch H."/>
            <person name="LaButti K."/>
            <person name="Lagendijk E.L."/>
            <person name="Lapidus A."/>
            <person name="Levasseur A."/>
            <person name="Lindquist E."/>
            <person name="Lipzen A."/>
            <person name="Logrieco A.F."/>
            <person name="MacCabe A."/>
            <person name="Maekelae M.R."/>
            <person name="Malavazi I."/>
            <person name="Melin P."/>
            <person name="Meyer V."/>
            <person name="Mielnichuk N."/>
            <person name="Miskei M."/>
            <person name="Molnar A.P."/>
            <person name="Mule G."/>
            <person name="Ngan C.Y."/>
            <person name="Orejas M."/>
            <person name="Orosz E."/>
            <person name="Ouedraogo J.P."/>
            <person name="Overkamp K.M."/>
            <person name="Park H.-S."/>
            <person name="Perrone G."/>
            <person name="Piumi F."/>
            <person name="Punt P.J."/>
            <person name="Ram A.F."/>
            <person name="Ramon A."/>
            <person name="Rauscher S."/>
            <person name="Record E."/>
            <person name="Riano-Pachon D.M."/>
            <person name="Robert V."/>
            <person name="Roehrig J."/>
            <person name="Ruller R."/>
            <person name="Salamov A."/>
            <person name="Salih N.S."/>
            <person name="Samson R.A."/>
            <person name="Sandor E."/>
            <person name="Sanguinetti M."/>
            <person name="Schuetze T."/>
            <person name="Sepcic K."/>
            <person name="Shelest E."/>
            <person name="Sherlock G."/>
            <person name="Sophianopoulou V."/>
            <person name="Squina F.M."/>
            <person name="Sun H."/>
            <person name="Susca A."/>
            <person name="Todd R.B."/>
            <person name="Tsang A."/>
            <person name="Unkles S.E."/>
            <person name="van de Wiele N."/>
            <person name="van Rossen-Uffink D."/>
            <person name="Oliveira J.V."/>
            <person name="Vesth T.C."/>
            <person name="Visser J."/>
            <person name="Yu J.-H."/>
            <person name="Zhou M."/>
            <person name="Andersen M.R."/>
            <person name="Archer D.B."/>
            <person name="Baker S.E."/>
            <person name="Benoit I."/>
            <person name="Brakhage A.A."/>
            <person name="Braus G.H."/>
            <person name="Fischer R."/>
            <person name="Frisvad J.C."/>
            <person name="Goldman G.H."/>
            <person name="Houbraken J."/>
            <person name="Oakley B."/>
            <person name="Pocsi I."/>
            <person name="Scazzocchio C."/>
            <person name="Seiboth B."/>
            <person name="vanKuyk P.A."/>
            <person name="Wortman J."/>
            <person name="Dyer P.S."/>
            <person name="Grigoriev I.V."/>
        </authorList>
    </citation>
    <scope>NUCLEOTIDE SEQUENCE [LARGE SCALE GENOMIC DNA]</scope>
    <source>
        <strain>ITEM 5010</strain>
    </source>
</reference>
<reference key="2">
    <citation type="journal article" date="2021" name="Mol. Plant Pathol.">
        <title>Functional roles of LaeA, polyketide synthase, and glucose oxidase in the regulation of ochratoxin A biosynthesis and virulence in Aspergillus carbonarius.</title>
        <authorList>
            <person name="Maor U."/>
            <person name="Barda O."/>
            <person name="Sadhasivam S."/>
            <person name="Bi Y."/>
            <person name="Levin E."/>
            <person name="Zakin V."/>
            <person name="Prusky D.B."/>
            <person name="Sionov E."/>
        </authorList>
    </citation>
    <scope>FUNCTION</scope>
    <scope>DISRUPTION PHENOTYPE</scope>
</reference>
<evidence type="ECO:0000250" key="1">
    <source>
        <dbReference type="UniProtKB" id="P13006"/>
    </source>
</evidence>
<evidence type="ECO:0000255" key="2"/>
<evidence type="ECO:0000255" key="3">
    <source>
        <dbReference type="PROSITE-ProRule" id="PRU00498"/>
    </source>
</evidence>
<evidence type="ECO:0000269" key="4">
    <source>
    </source>
</evidence>
<evidence type="ECO:0000303" key="5">
    <source>
    </source>
</evidence>
<evidence type="ECO:0000305" key="6"/>
<evidence type="ECO:0000305" key="7">
    <source>
    </source>
</evidence>
<dbReference type="EC" id="1.1.3.4" evidence="7"/>
<dbReference type="EMBL" id="KV907500">
    <property type="protein sequence ID" value="OOF95573.1"/>
    <property type="molecule type" value="Genomic_DNA"/>
</dbReference>
<dbReference type="SMR" id="A0A1R3RM75"/>
<dbReference type="STRING" id="602072.A0A1R3RM75"/>
<dbReference type="VEuPathDB" id="FungiDB:ASPCADRAFT_208051"/>
<dbReference type="OMA" id="YESNIGP"/>
<dbReference type="OrthoDB" id="269227at2759"/>
<dbReference type="PHI-base" id="PHI:10949"/>
<dbReference type="Proteomes" id="UP000188318">
    <property type="component" value="Unassembled WGS sequence"/>
</dbReference>
<dbReference type="GO" id="GO:0005737">
    <property type="term" value="C:cytoplasm"/>
    <property type="evidence" value="ECO:0007669"/>
    <property type="project" value="UniProtKB-SubCell"/>
</dbReference>
<dbReference type="GO" id="GO:0005576">
    <property type="term" value="C:extracellular region"/>
    <property type="evidence" value="ECO:0007669"/>
    <property type="project" value="UniProtKB-SubCell"/>
</dbReference>
<dbReference type="GO" id="GO:0050660">
    <property type="term" value="F:flavin adenine dinucleotide binding"/>
    <property type="evidence" value="ECO:0007669"/>
    <property type="project" value="InterPro"/>
</dbReference>
<dbReference type="GO" id="GO:0016614">
    <property type="term" value="F:oxidoreductase activity, acting on CH-OH group of donors"/>
    <property type="evidence" value="ECO:0007669"/>
    <property type="project" value="InterPro"/>
</dbReference>
<dbReference type="GO" id="GO:0044550">
    <property type="term" value="P:secondary metabolite biosynthetic process"/>
    <property type="evidence" value="ECO:0007669"/>
    <property type="project" value="UniProtKB-ARBA"/>
</dbReference>
<dbReference type="Gene3D" id="3.50.50.60">
    <property type="entry name" value="FAD/NAD(P)-binding domain"/>
    <property type="match status" value="1"/>
</dbReference>
<dbReference type="Gene3D" id="4.10.450.10">
    <property type="entry name" value="Glucose Oxidase, domain 2"/>
    <property type="match status" value="1"/>
</dbReference>
<dbReference type="Gene3D" id="3.30.560.10">
    <property type="entry name" value="Glucose Oxidase, domain 3"/>
    <property type="match status" value="1"/>
</dbReference>
<dbReference type="InterPro" id="IPR036188">
    <property type="entry name" value="FAD/NAD-bd_sf"/>
</dbReference>
<dbReference type="InterPro" id="IPR027424">
    <property type="entry name" value="Glucose_Oxidase_domain_2"/>
</dbReference>
<dbReference type="InterPro" id="IPR012132">
    <property type="entry name" value="GMC_OxRdtase"/>
</dbReference>
<dbReference type="InterPro" id="IPR000172">
    <property type="entry name" value="GMC_OxRdtase_N"/>
</dbReference>
<dbReference type="InterPro" id="IPR007867">
    <property type="entry name" value="GMC_OxRtase_C"/>
</dbReference>
<dbReference type="PANTHER" id="PTHR11552">
    <property type="entry name" value="GLUCOSE-METHANOL-CHOLINE GMC OXIDOREDUCTASE"/>
    <property type="match status" value="1"/>
</dbReference>
<dbReference type="PANTHER" id="PTHR11552:SF201">
    <property type="entry name" value="GLUCOSE-METHANOL-CHOLINE OXIDOREDUCTASE N-TERMINAL DOMAIN-CONTAINING PROTEIN"/>
    <property type="match status" value="1"/>
</dbReference>
<dbReference type="Pfam" id="PF05199">
    <property type="entry name" value="GMC_oxred_C"/>
    <property type="match status" value="1"/>
</dbReference>
<dbReference type="Pfam" id="PF00732">
    <property type="entry name" value="GMC_oxred_N"/>
    <property type="match status" value="1"/>
</dbReference>
<dbReference type="PIRSF" id="PIRSF000137">
    <property type="entry name" value="Alcohol_oxidase"/>
    <property type="match status" value="1"/>
</dbReference>
<dbReference type="SUPFAM" id="SSF54373">
    <property type="entry name" value="FAD-linked reductases, C-terminal domain"/>
    <property type="match status" value="1"/>
</dbReference>
<dbReference type="SUPFAM" id="SSF51905">
    <property type="entry name" value="FAD/NAD(P)-binding domain"/>
    <property type="match status" value="1"/>
</dbReference>
<dbReference type="PROSITE" id="PS00623">
    <property type="entry name" value="GMC_OXRED_1"/>
    <property type="match status" value="1"/>
</dbReference>
<dbReference type="PROSITE" id="PS00624">
    <property type="entry name" value="GMC_OXRED_2"/>
    <property type="match status" value="1"/>
</dbReference>
<protein>
    <recommendedName>
        <fullName evidence="5">Glucose oxidase</fullName>
        <shortName evidence="5">GOX</shortName>
        <ecNumber evidence="7">1.1.3.4</ecNumber>
    </recommendedName>
    <alternativeName>
        <fullName evidence="6">Beta-D-glucose:oxygen 1-oxido-reductase</fullName>
    </alternativeName>
</protein>
<accession>A0A1R3RM75</accession>
<proteinExistence type="inferred from homology"/>
<gene>
    <name type="ORF">ASPCADRAFT_208051</name>
</gene>
<feature type="signal peptide" evidence="2">
    <location>
        <begin position="1"/>
        <end position="16"/>
    </location>
</feature>
<feature type="chain" id="PRO_0000461182" description="Glucose oxidase">
    <location>
        <begin position="17"/>
        <end position="605"/>
    </location>
</feature>
<feature type="active site" description="Proton acceptor" evidence="1">
    <location>
        <position position="538"/>
    </location>
</feature>
<feature type="binding site" evidence="1">
    <location>
        <position position="51"/>
    </location>
    <ligand>
        <name>FAD</name>
        <dbReference type="ChEBI" id="CHEBI:57692"/>
    </ligand>
</feature>
<feature type="binding site" evidence="1">
    <location>
        <position position="52"/>
    </location>
    <ligand>
        <name>FAD</name>
        <dbReference type="ChEBI" id="CHEBI:57692"/>
    </ligand>
</feature>
<feature type="binding site" evidence="1">
    <location>
        <position position="72"/>
    </location>
    <ligand>
        <name>FAD</name>
        <dbReference type="ChEBI" id="CHEBI:57692"/>
    </ligand>
</feature>
<feature type="binding site" evidence="1">
    <location>
        <position position="125"/>
    </location>
    <ligand>
        <name>FAD</name>
        <dbReference type="ChEBI" id="CHEBI:57692"/>
    </ligand>
</feature>
<feature type="binding site" evidence="1">
    <location>
        <position position="129"/>
    </location>
    <ligand>
        <name>FAD</name>
        <dbReference type="ChEBI" id="CHEBI:57692"/>
    </ligand>
</feature>
<feature type="binding site" evidence="1">
    <location>
        <position position="130"/>
    </location>
    <ligand>
        <name>FAD</name>
        <dbReference type="ChEBI" id="CHEBI:57692"/>
    </ligand>
</feature>
<feature type="binding site" evidence="1">
    <location>
        <position position="132"/>
    </location>
    <ligand>
        <name>FAD</name>
        <dbReference type="ChEBI" id="CHEBI:57692"/>
    </ligand>
</feature>
<feature type="binding site" evidence="1">
    <location>
        <position position="272"/>
    </location>
    <ligand>
        <name>FAD</name>
        <dbReference type="ChEBI" id="CHEBI:57692"/>
    </ligand>
</feature>
<feature type="binding site" evidence="1">
    <location>
        <position position="559"/>
    </location>
    <ligand>
        <name>O2</name>
        <dbReference type="ChEBI" id="CHEBI:15379"/>
    </ligand>
</feature>
<feature type="binding site" evidence="1">
    <location>
        <position position="560"/>
    </location>
    <ligand>
        <name>O2</name>
        <dbReference type="ChEBI" id="CHEBI:15379"/>
    </ligand>
</feature>
<feature type="binding site" evidence="1">
    <location>
        <position position="571"/>
    </location>
    <ligand>
        <name>FAD</name>
        <dbReference type="ChEBI" id="CHEBI:57692"/>
    </ligand>
</feature>
<feature type="binding site" evidence="1">
    <location>
        <position position="583"/>
    </location>
    <ligand>
        <name>FAD</name>
        <dbReference type="ChEBI" id="CHEBI:57692"/>
    </ligand>
</feature>
<feature type="glycosylation site" description="N-linked (GlcNAc...) asparagine" evidence="3">
    <location>
        <position position="65"/>
    </location>
</feature>
<feature type="glycosylation site" description="N-linked (GlcNAc...) asparagine" evidence="3">
    <location>
        <position position="111"/>
    </location>
</feature>
<feature type="glycosylation site" description="N-linked (GlcNAc...) asparagine" evidence="1 3">
    <location>
        <position position="190"/>
    </location>
</feature>
<feature type="glycosylation site" description="N-linked (GlcNAc...) asparagine" evidence="1 3">
    <location>
        <position position="280"/>
    </location>
</feature>
<feature type="glycosylation site" description="N-linked (GlcNAc...) asparagine" evidence="1 3">
    <location>
        <position position="377"/>
    </location>
</feature>
<feature type="glycosylation site" description="N-linked (GlcNAc...) asparagine" evidence="1 3">
    <location>
        <position position="410"/>
    </location>
</feature>
<feature type="glycosylation site" description="N-linked (GlcNAc...) asparagine" evidence="1 3">
    <location>
        <position position="495"/>
    </location>
</feature>
<feature type="disulfide bond" evidence="1">
    <location>
        <begin position="186"/>
        <end position="228"/>
    </location>
</feature>
<keyword id="KW-0134">Cell wall</keyword>
<keyword id="KW-0963">Cytoplasm</keyword>
<keyword id="KW-1015">Disulfide bond</keyword>
<keyword id="KW-0272">Extracellular matrix</keyword>
<keyword id="KW-0274">FAD</keyword>
<keyword id="KW-0285">Flavoprotein</keyword>
<keyword id="KW-0325">Glycoprotein</keyword>
<keyword id="KW-0560">Oxidoreductase</keyword>
<keyword id="KW-1185">Reference proteome</keyword>
<keyword id="KW-0964">Secreted</keyword>
<keyword id="KW-0732">Signal</keyword>
<keyword id="KW-0843">Virulence</keyword>
<organism>
    <name type="scientific">Aspergillus carbonarius (strain ITEM 5010)</name>
    <dbReference type="NCBI Taxonomy" id="602072"/>
    <lineage>
        <taxon>Eukaryota</taxon>
        <taxon>Fungi</taxon>
        <taxon>Dikarya</taxon>
        <taxon>Ascomycota</taxon>
        <taxon>Pezizomycotina</taxon>
        <taxon>Eurotiomycetes</taxon>
        <taxon>Eurotiomycetidae</taxon>
        <taxon>Eurotiales</taxon>
        <taxon>Aspergillaceae</taxon>
        <taxon>Aspergillus</taxon>
        <taxon>Aspergillus subgen. Circumdati</taxon>
    </lineage>
</organism>
<sequence length="605" mass="65518">MKTILSSSLVVSMAAALPHYIRSSGIEASLLTDPKAVAGRTVDYIIAGGGLTGLTTAARLTENPNITVLVIESGFYESDRGPLVEDLNAYGEIFGSEVDHAYQTVELATNNLTELIRSGNGLGGSTLVNGGTWTRPHKVQVDSWETVFGNEGWNWENVAAYSLEAERARAPNAKQVAAGHYFDPSCHGTNGTVHVGPRDTGDDYTPIIDALMTTVENMGVPTKKDLGCGDPHGVSMFPNTLHEDQVRSDAAREWLLPNYQRPNLQVLTGQLVGKVLLDQNNTVPKAVGVEFGTHKANTFNVYAKHEVLLAAGSAVSPQILEHSGIGMKSVLDTVGIDTVVDLPVGLNLQDQTTVPVSSRITSAGAGQGQAAYFATFNETFGDYAPQAHALLNSKLEQWAEEAVARGGFHNATALRIQYENYRDWLVNHNVAYSELFLDTAGAVSFTIWDLIPFTRGYVHITDADPYLRLFAYDPQYFLNELDLYGQAAASQLARNLSNTDAMQTYFAGETTPGDNLAYDASLSDWAEYIKYNFRPNYHGVGTCSMMKKELGGVVDSSARVYGVDSLRVIDGSIPPTQVSSHVMTVFYAMALKISDAILADYASSQ</sequence>
<comment type="function">
    <text evidence="4 7">Glucose oxidase catalyzes the oxidation of beta-D-glucose to D-glucono-delta-lactone and hydrogen peroxide in the presence of molecular oxygen (Probable). Acts as a critical factor modulating pathogenicity by controlling transcription of genes important for fungal secondary metabolism and infection such as those coding for enzymes involved in degradation of the host cell wall (PubMed:33169928).</text>
</comment>
<comment type="catalytic activity">
    <reaction evidence="7">
        <text>beta-D-glucose + O2 = D-glucono-1,5-lactone + H2O2</text>
        <dbReference type="Rhea" id="RHEA:11428"/>
        <dbReference type="ChEBI" id="CHEBI:15379"/>
        <dbReference type="ChEBI" id="CHEBI:15903"/>
        <dbReference type="ChEBI" id="CHEBI:16217"/>
        <dbReference type="ChEBI" id="CHEBI:16240"/>
        <dbReference type="EC" id="1.1.3.4"/>
    </reaction>
    <physiologicalReaction direction="left-to-right" evidence="7">
        <dbReference type="Rhea" id="RHEA:11429"/>
    </physiologicalReaction>
</comment>
<comment type="cofactor">
    <cofactor evidence="1">
        <name>FAD</name>
        <dbReference type="ChEBI" id="CHEBI:57692"/>
    </cofactor>
</comment>
<comment type="subunit">
    <text evidence="1">Homodimer.</text>
</comment>
<comment type="subcellular location">
    <subcellularLocation>
        <location evidence="1">Secreted</location>
    </subcellularLocation>
    <subcellularLocation>
        <location evidence="1">Secreted</location>
        <location evidence="1">Cell wall</location>
    </subcellularLocation>
    <subcellularLocation>
        <location evidence="1">Cytoplasm</location>
    </subcellularLocation>
    <subcellularLocation>
        <location evidence="1">Secreted</location>
        <location evidence="1">Extracellular space</location>
        <location evidence="1">Extracellular matrix</location>
    </subcellularLocation>
</comment>
<comment type="disruption phenotype">
    <text evidence="4">Completely eliminates gluconic acid formation, both in vitro and in fruit (PubMed:33169928). Results in a significant reduction of decay development in nectarines and grape berries (PubMed:33169928). Decreases the expression of the ochratoxin biosynthesis genes (PubMed:33169928).</text>
</comment>
<comment type="similarity">
    <text evidence="6">Belongs to the GMC oxidoreductase family.</text>
</comment>